<evidence type="ECO:0000250" key="1"/>
<evidence type="ECO:0000305" key="2"/>
<reference key="1">
    <citation type="submission" date="1994-09" db="EMBL/GenBank/DDBJ databases">
        <authorList>
            <person name="Smith D.R."/>
            <person name="Robison K."/>
        </authorList>
    </citation>
    <scope>NUCLEOTIDE SEQUENCE [GENOMIC DNA]</scope>
</reference>
<reference key="2">
    <citation type="journal article" date="2001" name="Nature">
        <title>Massive gene decay in the leprosy bacillus.</title>
        <authorList>
            <person name="Cole S.T."/>
            <person name="Eiglmeier K."/>
            <person name="Parkhill J."/>
            <person name="James K.D."/>
            <person name="Thomson N.R."/>
            <person name="Wheeler P.R."/>
            <person name="Honore N."/>
            <person name="Garnier T."/>
            <person name="Churcher C.M."/>
            <person name="Harris D.E."/>
            <person name="Mungall K.L."/>
            <person name="Basham D."/>
            <person name="Brown D."/>
            <person name="Chillingworth T."/>
            <person name="Connor R."/>
            <person name="Davies R.M."/>
            <person name="Devlin K."/>
            <person name="Duthoy S."/>
            <person name="Feltwell T."/>
            <person name="Fraser A."/>
            <person name="Hamlin N."/>
            <person name="Holroyd S."/>
            <person name="Hornsby T."/>
            <person name="Jagels K."/>
            <person name="Lacroix C."/>
            <person name="Maclean J."/>
            <person name="Moule S."/>
            <person name="Murphy L.D."/>
            <person name="Oliver K."/>
            <person name="Quail M.A."/>
            <person name="Rajandream M.A."/>
            <person name="Rutherford K.M."/>
            <person name="Rutter S."/>
            <person name="Seeger K."/>
            <person name="Simon S."/>
            <person name="Simmonds M."/>
            <person name="Skelton J."/>
            <person name="Squares R."/>
            <person name="Squares S."/>
            <person name="Stevens K."/>
            <person name="Taylor K."/>
            <person name="Whitehead S."/>
            <person name="Woodward J.R."/>
            <person name="Barrell B.G."/>
        </authorList>
    </citation>
    <scope>NUCLEOTIDE SEQUENCE [LARGE SCALE GENOMIC DNA]</scope>
    <source>
        <strain>TN</strain>
    </source>
</reference>
<name>THRC_MYCLE</name>
<feature type="chain" id="PRO_0000185636" description="Threonine synthase">
    <location>
        <begin position="1"/>
        <end position="360"/>
    </location>
</feature>
<feature type="binding site" evidence="1">
    <location>
        <position position="95"/>
    </location>
    <ligand>
        <name>pyridoxal 5'-phosphate</name>
        <dbReference type="ChEBI" id="CHEBI:597326"/>
    </ligand>
</feature>
<feature type="binding site" evidence="1">
    <location>
        <begin position="196"/>
        <end position="200"/>
    </location>
    <ligand>
        <name>pyridoxal 5'-phosphate</name>
        <dbReference type="ChEBI" id="CHEBI:597326"/>
    </ligand>
</feature>
<feature type="binding site" evidence="1">
    <location>
        <position position="326"/>
    </location>
    <ligand>
        <name>pyridoxal 5'-phosphate</name>
        <dbReference type="ChEBI" id="CHEBI:597326"/>
    </ligand>
</feature>
<feature type="modified residue" description="N6-(pyridoxal phosphate)lysine" evidence="1">
    <location>
        <position position="69"/>
    </location>
</feature>
<sequence>MSGQQTTTHQPWPGVIAAYRDRLPVGDDWTPVTLLEGGTPLIAAPRLSEQTGCTIHLKVEGLNPTGSFKDRGMTMAVTDALARGQRAVLCASTGNTSASAAAYAARAGITCAVLIPQGKIAMGKLAQAVMHGAKIIQIDGNFDDCLELARKMAADFPMISLVNSVNPVRIEGQKTAVFEIVDALGTAPHVHALPVGNAGNITAYWKGYTEYHADGLIDRLPRMLGTQAAGAAPLVLGEPVSHPETIATAIRIGSPASWTSAVEAQQQSKGRFLAATDEEILAAYHLVARAEGVFVEPASAASIAGLLKAIDGGWVARGSTVVCTITGNGLKDPDTALKDMPSVSPVPVDAVAVVEQLGLV</sequence>
<comment type="function">
    <text evidence="1">Catalyzes the gamma-elimination of phosphate from L-phosphohomoserine and the beta-addition of water to produce L-threonine.</text>
</comment>
<comment type="catalytic activity">
    <reaction>
        <text>O-phospho-L-homoserine + H2O = L-threonine + phosphate</text>
        <dbReference type="Rhea" id="RHEA:10840"/>
        <dbReference type="ChEBI" id="CHEBI:15377"/>
        <dbReference type="ChEBI" id="CHEBI:43474"/>
        <dbReference type="ChEBI" id="CHEBI:57590"/>
        <dbReference type="ChEBI" id="CHEBI:57926"/>
        <dbReference type="EC" id="4.2.3.1"/>
    </reaction>
</comment>
<comment type="cofactor">
    <cofactor evidence="1">
        <name>pyridoxal 5'-phosphate</name>
        <dbReference type="ChEBI" id="CHEBI:597326"/>
    </cofactor>
</comment>
<comment type="pathway">
    <text>Amino-acid biosynthesis; L-threonine biosynthesis; L-threonine from L-aspartate: step 5/5.</text>
</comment>
<comment type="subunit">
    <text evidence="1">Homodimer.</text>
</comment>
<comment type="similarity">
    <text evidence="2">Belongs to the threonine synthase family.</text>
</comment>
<organism>
    <name type="scientific">Mycobacterium leprae (strain TN)</name>
    <dbReference type="NCBI Taxonomy" id="272631"/>
    <lineage>
        <taxon>Bacteria</taxon>
        <taxon>Bacillati</taxon>
        <taxon>Actinomycetota</taxon>
        <taxon>Actinomycetes</taxon>
        <taxon>Mycobacteriales</taxon>
        <taxon>Mycobacteriaceae</taxon>
        <taxon>Mycobacterium</taxon>
    </lineage>
</organism>
<proteinExistence type="inferred from homology"/>
<keyword id="KW-0028">Amino-acid biosynthesis</keyword>
<keyword id="KW-0456">Lyase</keyword>
<keyword id="KW-0663">Pyridoxal phosphate</keyword>
<keyword id="KW-1185">Reference proteome</keyword>
<keyword id="KW-0791">Threonine biosynthesis</keyword>
<accession>P45837</accession>
<protein>
    <recommendedName>
        <fullName>Threonine synthase</fullName>
        <shortName>TS</shortName>
        <ecNumber>4.2.3.1</ecNumber>
    </recommendedName>
</protein>
<gene>
    <name type="primary">thrC</name>
    <name type="ordered locus">ML1130</name>
</gene>
<dbReference type="EC" id="4.2.3.1"/>
<dbReference type="EMBL" id="U15186">
    <property type="protein sequence ID" value="AAA63090.1"/>
    <property type="molecule type" value="Genomic_DNA"/>
</dbReference>
<dbReference type="EMBL" id="AL583920">
    <property type="protein sequence ID" value="CAC31511.1"/>
    <property type="molecule type" value="Genomic_DNA"/>
</dbReference>
<dbReference type="PIR" id="T09991">
    <property type="entry name" value="T09991"/>
</dbReference>
<dbReference type="RefSeq" id="NP_301824.1">
    <property type="nucleotide sequence ID" value="NC_002677.1"/>
</dbReference>
<dbReference type="RefSeq" id="WP_010908148.1">
    <property type="nucleotide sequence ID" value="NC_002677.1"/>
</dbReference>
<dbReference type="SMR" id="P45837"/>
<dbReference type="STRING" id="272631.gene:17574957"/>
<dbReference type="KEGG" id="mle:ML1130"/>
<dbReference type="PATRIC" id="fig|272631.5.peg.2052"/>
<dbReference type="Leproma" id="ML1130"/>
<dbReference type="eggNOG" id="COG0498">
    <property type="taxonomic scope" value="Bacteria"/>
</dbReference>
<dbReference type="HOGENOM" id="CLU_028142_0_0_11"/>
<dbReference type="OrthoDB" id="9778118at2"/>
<dbReference type="UniPathway" id="UPA00050">
    <property type="reaction ID" value="UER00065"/>
</dbReference>
<dbReference type="Proteomes" id="UP000000806">
    <property type="component" value="Chromosome"/>
</dbReference>
<dbReference type="GO" id="GO:0003941">
    <property type="term" value="F:L-serine ammonia-lyase activity"/>
    <property type="evidence" value="ECO:0007669"/>
    <property type="project" value="TreeGrafter"/>
</dbReference>
<dbReference type="GO" id="GO:0030170">
    <property type="term" value="F:pyridoxal phosphate binding"/>
    <property type="evidence" value="ECO:0007669"/>
    <property type="project" value="InterPro"/>
</dbReference>
<dbReference type="GO" id="GO:0004794">
    <property type="term" value="F:threonine deaminase activity"/>
    <property type="evidence" value="ECO:0007669"/>
    <property type="project" value="TreeGrafter"/>
</dbReference>
<dbReference type="GO" id="GO:0004795">
    <property type="term" value="F:threonine synthase activity"/>
    <property type="evidence" value="ECO:0007669"/>
    <property type="project" value="UniProtKB-EC"/>
</dbReference>
<dbReference type="GO" id="GO:0009097">
    <property type="term" value="P:isoleucine biosynthetic process"/>
    <property type="evidence" value="ECO:0007669"/>
    <property type="project" value="TreeGrafter"/>
</dbReference>
<dbReference type="GO" id="GO:0006565">
    <property type="term" value="P:L-serine catabolic process"/>
    <property type="evidence" value="ECO:0007669"/>
    <property type="project" value="TreeGrafter"/>
</dbReference>
<dbReference type="GO" id="GO:0009088">
    <property type="term" value="P:threonine biosynthetic process"/>
    <property type="evidence" value="ECO:0007669"/>
    <property type="project" value="UniProtKB-UniPathway"/>
</dbReference>
<dbReference type="GO" id="GO:0006567">
    <property type="term" value="P:threonine catabolic process"/>
    <property type="evidence" value="ECO:0007669"/>
    <property type="project" value="TreeGrafter"/>
</dbReference>
<dbReference type="CDD" id="cd01563">
    <property type="entry name" value="Thr-synth_1"/>
    <property type="match status" value="1"/>
</dbReference>
<dbReference type="FunFam" id="3.40.50.1100:FF:000013">
    <property type="entry name" value="Threonine synthase"/>
    <property type="match status" value="1"/>
</dbReference>
<dbReference type="FunFam" id="3.40.50.1100:FF:000014">
    <property type="entry name" value="Threonine synthase"/>
    <property type="match status" value="1"/>
</dbReference>
<dbReference type="Gene3D" id="3.40.50.1100">
    <property type="match status" value="2"/>
</dbReference>
<dbReference type="InterPro" id="IPR050147">
    <property type="entry name" value="Ser/Thr_Dehydratase"/>
</dbReference>
<dbReference type="InterPro" id="IPR000634">
    <property type="entry name" value="Ser/Thr_deHydtase_PyrdxlP-BS"/>
</dbReference>
<dbReference type="InterPro" id="IPR004450">
    <property type="entry name" value="Thr_synthase-like"/>
</dbReference>
<dbReference type="InterPro" id="IPR026260">
    <property type="entry name" value="Thr_Synthase_bac/arc"/>
</dbReference>
<dbReference type="InterPro" id="IPR001926">
    <property type="entry name" value="TrpB-like_PALP"/>
</dbReference>
<dbReference type="InterPro" id="IPR036052">
    <property type="entry name" value="TrpB-like_PALP_sf"/>
</dbReference>
<dbReference type="NCBIfam" id="TIGR00260">
    <property type="entry name" value="thrC"/>
    <property type="match status" value="1"/>
</dbReference>
<dbReference type="PANTHER" id="PTHR48078:SF6">
    <property type="entry name" value="L-THREONINE DEHYDRATASE CATABOLIC TDCB"/>
    <property type="match status" value="1"/>
</dbReference>
<dbReference type="PANTHER" id="PTHR48078">
    <property type="entry name" value="THREONINE DEHYDRATASE, MITOCHONDRIAL-RELATED"/>
    <property type="match status" value="1"/>
</dbReference>
<dbReference type="Pfam" id="PF00291">
    <property type="entry name" value="PALP"/>
    <property type="match status" value="1"/>
</dbReference>
<dbReference type="PIRSF" id="PIRSF038945">
    <property type="entry name" value="Thr_synthase"/>
    <property type="match status" value="1"/>
</dbReference>
<dbReference type="SUPFAM" id="SSF53686">
    <property type="entry name" value="Tryptophan synthase beta subunit-like PLP-dependent enzymes"/>
    <property type="match status" value="1"/>
</dbReference>
<dbReference type="PROSITE" id="PS00165">
    <property type="entry name" value="DEHYDRATASE_SER_THR"/>
    <property type="match status" value="1"/>
</dbReference>